<evidence type="ECO:0000256" key="1">
    <source>
        <dbReference type="SAM" id="MobiDB-lite"/>
    </source>
</evidence>
<evidence type="ECO:0007744" key="2">
    <source>
    </source>
</evidence>
<evidence type="ECO:0007744" key="3">
    <source>
    </source>
</evidence>
<evidence type="ECO:0007744" key="4">
    <source>
    </source>
</evidence>
<feature type="chain" id="PRO_0000064768" description="Cell death regulator Aven">
    <location>
        <begin position="1"/>
        <end position="362"/>
    </location>
</feature>
<feature type="region of interest" description="Disordered" evidence="1">
    <location>
        <begin position="1"/>
        <end position="111"/>
    </location>
</feature>
<feature type="region of interest" description="Disordered" evidence="1">
    <location>
        <begin position="214"/>
        <end position="237"/>
    </location>
</feature>
<feature type="region of interest" description="Disordered" evidence="1">
    <location>
        <begin position="253"/>
        <end position="362"/>
    </location>
</feature>
<feature type="compositionally biased region" description="Basic residues" evidence="1">
    <location>
        <begin position="8"/>
        <end position="17"/>
    </location>
</feature>
<feature type="compositionally biased region" description="Gly residues" evidence="1">
    <location>
        <begin position="37"/>
        <end position="47"/>
    </location>
</feature>
<feature type="compositionally biased region" description="Basic residues" evidence="1">
    <location>
        <begin position="50"/>
        <end position="60"/>
    </location>
</feature>
<feature type="compositionally biased region" description="Gly residues" evidence="1">
    <location>
        <begin position="61"/>
        <end position="72"/>
    </location>
</feature>
<feature type="compositionally biased region" description="Acidic residues" evidence="1">
    <location>
        <begin position="90"/>
        <end position="105"/>
    </location>
</feature>
<feature type="compositionally biased region" description="Acidic residues" evidence="1">
    <location>
        <begin position="350"/>
        <end position="362"/>
    </location>
</feature>
<feature type="modified residue" description="Phosphoserine" evidence="2 3">
    <location>
        <position position="94"/>
    </location>
</feature>
<feature type="modified residue" description="N6-methyllysine" evidence="4">
    <location>
        <position position="230"/>
    </location>
</feature>
<feature type="sequence variant" id="VAR_020144" description="In dbSNP:rs2241647.">
    <original>Q</original>
    <variation>R</variation>
    <location>
        <position position="228"/>
    </location>
</feature>
<dbReference type="EMBL" id="AF283508">
    <property type="protein sequence ID" value="AAF91470.1"/>
    <property type="molecule type" value="mRNA"/>
</dbReference>
<dbReference type="EMBL" id="BC010488">
    <property type="protein sequence ID" value="AAH10488.1"/>
    <property type="molecule type" value="mRNA"/>
</dbReference>
<dbReference type="EMBL" id="BC063533">
    <property type="protein sequence ID" value="AAH63533.1"/>
    <property type="molecule type" value="mRNA"/>
</dbReference>
<dbReference type="CCDS" id="CCDS10030.1"/>
<dbReference type="RefSeq" id="NP_065104.1">
    <property type="nucleotide sequence ID" value="NM_020371.3"/>
</dbReference>
<dbReference type="BioGRID" id="121366">
    <property type="interactions" value="31"/>
</dbReference>
<dbReference type="FunCoup" id="Q9NQS1">
    <property type="interactions" value="300"/>
</dbReference>
<dbReference type="IntAct" id="Q9NQS1">
    <property type="interactions" value="11"/>
</dbReference>
<dbReference type="MINT" id="Q9NQS1"/>
<dbReference type="STRING" id="9606.ENSP00000306822"/>
<dbReference type="GlyGen" id="Q9NQS1">
    <property type="glycosylation" value="1 site, 1 O-linked glycan (1 site)"/>
</dbReference>
<dbReference type="iPTMnet" id="Q9NQS1"/>
<dbReference type="PhosphoSitePlus" id="Q9NQS1"/>
<dbReference type="BioMuta" id="AVEN"/>
<dbReference type="DMDM" id="20454834"/>
<dbReference type="jPOST" id="Q9NQS1"/>
<dbReference type="MassIVE" id="Q9NQS1"/>
<dbReference type="PaxDb" id="9606-ENSP00000306822"/>
<dbReference type="PeptideAtlas" id="Q9NQS1"/>
<dbReference type="ProteomicsDB" id="82177"/>
<dbReference type="Pumba" id="Q9NQS1"/>
<dbReference type="Antibodypedia" id="9528">
    <property type="antibodies" value="352 antibodies from 32 providers"/>
</dbReference>
<dbReference type="DNASU" id="57099"/>
<dbReference type="Ensembl" id="ENST00000306730.8">
    <property type="protein sequence ID" value="ENSP00000306822.3"/>
    <property type="gene ID" value="ENSG00000169857.9"/>
</dbReference>
<dbReference type="GeneID" id="57099"/>
<dbReference type="KEGG" id="hsa:57099"/>
<dbReference type="MANE-Select" id="ENST00000306730.8">
    <property type="protein sequence ID" value="ENSP00000306822.3"/>
    <property type="RefSeq nucleotide sequence ID" value="NM_020371.3"/>
    <property type="RefSeq protein sequence ID" value="NP_065104.1"/>
</dbReference>
<dbReference type="UCSC" id="uc001zhj.4">
    <property type="organism name" value="human"/>
</dbReference>
<dbReference type="AGR" id="HGNC:13509"/>
<dbReference type="CTD" id="57099"/>
<dbReference type="DisGeNET" id="57099"/>
<dbReference type="GeneCards" id="AVEN"/>
<dbReference type="HGNC" id="HGNC:13509">
    <property type="gene designation" value="AVEN"/>
</dbReference>
<dbReference type="HPA" id="ENSG00000169857">
    <property type="expression patterns" value="Low tissue specificity"/>
</dbReference>
<dbReference type="MIM" id="605265">
    <property type="type" value="gene"/>
</dbReference>
<dbReference type="neXtProt" id="NX_Q9NQS1"/>
<dbReference type="OpenTargets" id="ENSG00000169857"/>
<dbReference type="PharmGKB" id="PA134874337"/>
<dbReference type="VEuPathDB" id="HostDB:ENSG00000169857"/>
<dbReference type="eggNOG" id="ENOG502S0YI">
    <property type="taxonomic scope" value="Eukaryota"/>
</dbReference>
<dbReference type="GeneTree" id="ENSGT00390000003299"/>
<dbReference type="HOGENOM" id="CLU_074829_0_0_1"/>
<dbReference type="InParanoid" id="Q9NQS1"/>
<dbReference type="OMA" id="FTHFRFA"/>
<dbReference type="OrthoDB" id="6338233at2759"/>
<dbReference type="PAN-GO" id="Q9NQS1">
    <property type="GO annotations" value="1 GO annotation based on evolutionary models"/>
</dbReference>
<dbReference type="PhylomeDB" id="Q9NQS1"/>
<dbReference type="TreeFam" id="TF332067"/>
<dbReference type="PathwayCommons" id="Q9NQS1"/>
<dbReference type="Reactome" id="R-HSA-111458">
    <property type="pathway name" value="Formation of apoptosome"/>
</dbReference>
<dbReference type="Reactome" id="R-HSA-9627069">
    <property type="pathway name" value="Regulation of the apoptosome activity"/>
</dbReference>
<dbReference type="SignaLink" id="Q9NQS1"/>
<dbReference type="SIGNOR" id="Q9NQS1"/>
<dbReference type="BioGRID-ORCS" id="57099">
    <property type="hits" value="32 hits in 1154 CRISPR screens"/>
</dbReference>
<dbReference type="ChiTaRS" id="AVEN">
    <property type="organism name" value="human"/>
</dbReference>
<dbReference type="GenomeRNAi" id="57099"/>
<dbReference type="Pharos" id="Q9NQS1">
    <property type="development level" value="Tbio"/>
</dbReference>
<dbReference type="PRO" id="PR:Q9NQS1"/>
<dbReference type="Proteomes" id="UP000005640">
    <property type="component" value="Chromosome 15"/>
</dbReference>
<dbReference type="RNAct" id="Q9NQS1">
    <property type="molecule type" value="protein"/>
</dbReference>
<dbReference type="Bgee" id="ENSG00000169857">
    <property type="expression patterns" value="Expressed in heart right ventricle and 167 other cell types or tissues"/>
</dbReference>
<dbReference type="ExpressionAtlas" id="Q9NQS1">
    <property type="expression patterns" value="baseline and differential"/>
</dbReference>
<dbReference type="GO" id="GO:0005829">
    <property type="term" value="C:cytosol"/>
    <property type="evidence" value="ECO:0000304"/>
    <property type="project" value="Reactome"/>
</dbReference>
<dbReference type="GO" id="GO:0012505">
    <property type="term" value="C:endomembrane system"/>
    <property type="evidence" value="ECO:0007669"/>
    <property type="project" value="UniProtKB-SubCell"/>
</dbReference>
<dbReference type="GO" id="GO:0016020">
    <property type="term" value="C:membrane"/>
    <property type="evidence" value="ECO:0000314"/>
    <property type="project" value="UniProtKB"/>
</dbReference>
<dbReference type="GO" id="GO:0006915">
    <property type="term" value="P:apoptotic process"/>
    <property type="evidence" value="ECO:0007669"/>
    <property type="project" value="UniProtKB-KW"/>
</dbReference>
<dbReference type="GO" id="GO:0043066">
    <property type="term" value="P:negative regulation of apoptotic process"/>
    <property type="evidence" value="ECO:0000314"/>
    <property type="project" value="UniProtKB"/>
</dbReference>
<dbReference type="GO" id="GO:0010972">
    <property type="term" value="P:negative regulation of G2/M transition of mitotic cell cycle"/>
    <property type="evidence" value="ECO:0000318"/>
    <property type="project" value="GO_Central"/>
</dbReference>
<dbReference type="InterPro" id="IPR026187">
    <property type="entry name" value="Aven"/>
</dbReference>
<dbReference type="PANTHER" id="PTHR16524">
    <property type="entry name" value="CELL DEATH REGULATOR AVEN"/>
    <property type="match status" value="1"/>
</dbReference>
<dbReference type="PANTHER" id="PTHR16524:SF2">
    <property type="entry name" value="CELL DEATH REGULATOR AVEN"/>
    <property type="match status" value="1"/>
</dbReference>
<gene>
    <name type="primary">AVEN</name>
</gene>
<name>AVEN_HUMAN</name>
<proteinExistence type="evidence at protein level"/>
<keyword id="KW-0053">Apoptosis</keyword>
<keyword id="KW-0472">Membrane</keyword>
<keyword id="KW-0488">Methylation</keyword>
<keyword id="KW-0597">Phosphoprotein</keyword>
<keyword id="KW-1267">Proteomics identification</keyword>
<keyword id="KW-1185">Reference proteome</keyword>
<protein>
    <recommendedName>
        <fullName>Cell death regulator Aven</fullName>
    </recommendedName>
</protein>
<comment type="function">
    <text>Protects against apoptosis mediated by Apaf-1.</text>
</comment>
<comment type="subunit">
    <text>Binds Apaf-1, BCL-2 and BAD (Bcl-xl).</text>
</comment>
<comment type="subcellular location">
    <subcellularLocation>
        <location>Endomembrane system</location>
        <topology>Peripheral membrane protein</topology>
    </subcellularLocation>
    <text>Associated with intracellular membranes.</text>
</comment>
<comment type="tissue specificity">
    <text>Highly expressed in testis, ovary, thymus, prostate, spleen, small intestine, colon, heart, skeletal muscle, liver, kidney and pancreas.</text>
</comment>
<sequence length="362" mass="38506">MQAERGARGGRGRRPGRGRPGGDRHSERPGAAAAVARGGGGGGGGDGGGRRGRGRGRGFRGARGGRGGGGAPRGSRREPGGWGAGASAPVEDDSDAETYGEENDEQGNYSKRKIVSNWDRYQDIEKEVNNESGESQRGTDFSVLLSSAGDSFSQFRFAEEKEWDSEASCPKQNSAFYVDSELLVRALQELPLCLRLNVAAELVQGTVPLEVPQVKPKRTDDGKGLGMQLKGPLGPGGRGPIFELKSVAAGCPVLLGKDNPSPGPSRDSQKPTSPLQSAGDHLEEELDLLLNLDAPIKEGDNILPDQTSQDLKSKEDGEVVQEEEVCAKPSVTEEKNMEPEQPSTSKNVTEEELEDWLDSMIS</sequence>
<organism>
    <name type="scientific">Homo sapiens</name>
    <name type="common">Human</name>
    <dbReference type="NCBI Taxonomy" id="9606"/>
    <lineage>
        <taxon>Eukaryota</taxon>
        <taxon>Metazoa</taxon>
        <taxon>Chordata</taxon>
        <taxon>Craniata</taxon>
        <taxon>Vertebrata</taxon>
        <taxon>Euteleostomi</taxon>
        <taxon>Mammalia</taxon>
        <taxon>Eutheria</taxon>
        <taxon>Euarchontoglires</taxon>
        <taxon>Primates</taxon>
        <taxon>Haplorrhini</taxon>
        <taxon>Catarrhini</taxon>
        <taxon>Hominidae</taxon>
        <taxon>Homo</taxon>
    </lineage>
</organism>
<reference key="1">
    <citation type="journal article" date="2000" name="Mol. Cell">
        <title>Aven, a novel inhibitor of caspase activation, binds Bcl-xL and Apaf-1.</title>
        <authorList>
            <person name="Chau B.N."/>
            <person name="Cheng E.H.-Y."/>
            <person name="Kerr D.A."/>
            <person name="Hardwick J.M."/>
        </authorList>
    </citation>
    <scope>NUCLEOTIDE SEQUENCE [MRNA]</scope>
</reference>
<reference key="2">
    <citation type="journal article" date="2004" name="Genome Res.">
        <title>The status, quality, and expansion of the NIH full-length cDNA project: the Mammalian Gene Collection (MGC).</title>
        <authorList>
            <consortium name="The MGC Project Team"/>
        </authorList>
    </citation>
    <scope>NUCLEOTIDE SEQUENCE [LARGE SCALE MRNA]</scope>
    <source>
        <tissue>Kidney</tissue>
        <tissue>Placenta</tissue>
    </source>
</reference>
<reference key="3">
    <citation type="journal article" date="2006" name="Cell">
        <title>Global, in vivo, and site-specific phosphorylation dynamics in signaling networks.</title>
        <authorList>
            <person name="Olsen J.V."/>
            <person name="Blagoev B."/>
            <person name="Gnad F."/>
            <person name="Macek B."/>
            <person name="Kumar C."/>
            <person name="Mortensen P."/>
            <person name="Mann M."/>
        </authorList>
    </citation>
    <scope>IDENTIFICATION BY MASS SPECTROMETRY [LARGE SCALE ANALYSIS]</scope>
    <source>
        <tissue>Cervix carcinoma</tissue>
    </source>
</reference>
<reference key="4">
    <citation type="journal article" date="2008" name="Proc. Natl. Acad. Sci. U.S.A.">
        <title>A quantitative atlas of mitotic phosphorylation.</title>
        <authorList>
            <person name="Dephoure N."/>
            <person name="Zhou C."/>
            <person name="Villen J."/>
            <person name="Beausoleil S.A."/>
            <person name="Bakalarski C.E."/>
            <person name="Elledge S.J."/>
            <person name="Gygi S.P."/>
        </authorList>
    </citation>
    <scope>PHOSPHORYLATION [LARGE SCALE ANALYSIS] AT SER-94</scope>
    <scope>IDENTIFICATION BY MASS SPECTROMETRY [LARGE SCALE ANALYSIS]</scope>
    <source>
        <tissue>Cervix carcinoma</tissue>
    </source>
</reference>
<reference key="5">
    <citation type="journal article" date="2010" name="Sci. Signal.">
        <title>Quantitative phosphoproteomics reveals widespread full phosphorylation site occupancy during mitosis.</title>
        <authorList>
            <person name="Olsen J.V."/>
            <person name="Vermeulen M."/>
            <person name="Santamaria A."/>
            <person name="Kumar C."/>
            <person name="Miller M.L."/>
            <person name="Jensen L.J."/>
            <person name="Gnad F."/>
            <person name="Cox J."/>
            <person name="Jensen T.S."/>
            <person name="Nigg E.A."/>
            <person name="Brunak S."/>
            <person name="Mann M."/>
        </authorList>
    </citation>
    <scope>IDENTIFICATION BY MASS SPECTROMETRY [LARGE SCALE ANALYSIS]</scope>
    <source>
        <tissue>Cervix carcinoma</tissue>
    </source>
</reference>
<reference key="6">
    <citation type="journal article" date="2013" name="J. Proteome Res.">
        <title>Toward a comprehensive characterization of a human cancer cell phosphoproteome.</title>
        <authorList>
            <person name="Zhou H."/>
            <person name="Di Palma S."/>
            <person name="Preisinger C."/>
            <person name="Peng M."/>
            <person name="Polat A.N."/>
            <person name="Heck A.J."/>
            <person name="Mohammed S."/>
        </authorList>
    </citation>
    <scope>PHOSPHORYLATION [LARGE SCALE ANALYSIS] AT SER-94</scope>
    <scope>IDENTIFICATION BY MASS SPECTROMETRY [LARGE SCALE ANALYSIS]</scope>
    <source>
        <tissue>Cervix carcinoma</tissue>
        <tissue>Erythroleukemia</tissue>
    </source>
</reference>
<reference key="7">
    <citation type="journal article" date="2014" name="J. Proteomics">
        <title>An enzyme assisted RP-RPLC approach for in-depth analysis of human liver phosphoproteome.</title>
        <authorList>
            <person name="Bian Y."/>
            <person name="Song C."/>
            <person name="Cheng K."/>
            <person name="Dong M."/>
            <person name="Wang F."/>
            <person name="Huang J."/>
            <person name="Sun D."/>
            <person name="Wang L."/>
            <person name="Ye M."/>
            <person name="Zou H."/>
        </authorList>
    </citation>
    <scope>IDENTIFICATION BY MASS SPECTROMETRY [LARGE SCALE ANALYSIS]</scope>
    <source>
        <tissue>Liver</tissue>
    </source>
</reference>
<reference key="8">
    <citation type="journal article" date="2014" name="Mol. Cell. Proteomics">
        <title>Immunoaffinity enrichment and mass spectrometry analysis of protein methylation.</title>
        <authorList>
            <person name="Guo A."/>
            <person name="Gu H."/>
            <person name="Zhou J."/>
            <person name="Mulhern D."/>
            <person name="Wang Y."/>
            <person name="Lee K.A."/>
            <person name="Yang V."/>
            <person name="Aguiar M."/>
            <person name="Kornhauser J."/>
            <person name="Jia X."/>
            <person name="Ren J."/>
            <person name="Beausoleil S.A."/>
            <person name="Silva J.C."/>
            <person name="Vemulapalli V."/>
            <person name="Bedford M.T."/>
            <person name="Comb M.J."/>
        </authorList>
    </citation>
    <scope>METHYLATION [LARGE SCALE ANALYSIS] AT LYS-230</scope>
    <scope>IDENTIFICATION BY MASS SPECTROMETRY [LARGE SCALE ANALYSIS]</scope>
    <source>
        <tissue>Colon carcinoma</tissue>
    </source>
</reference>
<accession>Q9NQS1</accession>